<feature type="initiator methionine" description="Removed" evidence="3">
    <location>
        <position position="1"/>
    </location>
</feature>
<feature type="chain" id="PRO_0000178287" description="Small ribosomal subunit protein bS21">
    <location>
        <begin position="2"/>
        <end position="62"/>
    </location>
</feature>
<feature type="region of interest" description="Disordered" evidence="2">
    <location>
        <begin position="43"/>
        <end position="62"/>
    </location>
</feature>
<feature type="compositionally biased region" description="Basic residues" evidence="2">
    <location>
        <begin position="45"/>
        <end position="62"/>
    </location>
</feature>
<feature type="sequence conflict" description="In Ref. 2; AA sequence." evidence="5" ref="2">
    <original>I</original>
    <variation>K</variation>
    <location>
        <position position="4"/>
    </location>
</feature>
<accession>P0A4B8</accession>
<accession>P49224</accession>
<sequence length="62" mass="7531">MTQIVVGENEHIESALRRFKREVSKAGIFQDMRKHRHFETPIEKSKRKKLALHKQSKRRFRT</sequence>
<protein>
    <recommendedName>
        <fullName evidence="1">Small ribosomal subunit protein bS21</fullName>
    </recommendedName>
    <alternativeName>
        <fullName evidence="5">30S ribosomal protein S21</fullName>
    </alternativeName>
</protein>
<dbReference type="EMBL" id="D17710">
    <property type="protein sequence ID" value="BAA04564.1"/>
    <property type="molecule type" value="Genomic_DNA"/>
</dbReference>
<dbReference type="PIR" id="I39622">
    <property type="entry name" value="I39622"/>
</dbReference>
<dbReference type="SMR" id="P0A4B8"/>
<dbReference type="OMA" id="HEHYLKP"/>
<dbReference type="GO" id="GO:1990904">
    <property type="term" value="C:ribonucleoprotein complex"/>
    <property type="evidence" value="ECO:0007669"/>
    <property type="project" value="UniProtKB-KW"/>
</dbReference>
<dbReference type="GO" id="GO:0005840">
    <property type="term" value="C:ribosome"/>
    <property type="evidence" value="ECO:0007669"/>
    <property type="project" value="UniProtKB-KW"/>
</dbReference>
<dbReference type="GO" id="GO:0003735">
    <property type="term" value="F:structural constituent of ribosome"/>
    <property type="evidence" value="ECO:0007669"/>
    <property type="project" value="InterPro"/>
</dbReference>
<dbReference type="GO" id="GO:0006412">
    <property type="term" value="P:translation"/>
    <property type="evidence" value="ECO:0007669"/>
    <property type="project" value="UniProtKB-UniRule"/>
</dbReference>
<dbReference type="Gene3D" id="1.20.5.1150">
    <property type="entry name" value="Ribosomal protein S8"/>
    <property type="match status" value="1"/>
</dbReference>
<dbReference type="HAMAP" id="MF_00358">
    <property type="entry name" value="Ribosomal_bS21"/>
    <property type="match status" value="1"/>
</dbReference>
<dbReference type="InterPro" id="IPR001911">
    <property type="entry name" value="Ribosomal_bS21"/>
</dbReference>
<dbReference type="InterPro" id="IPR018278">
    <property type="entry name" value="Ribosomal_bS21_CS"/>
</dbReference>
<dbReference type="InterPro" id="IPR038380">
    <property type="entry name" value="Ribosomal_bS21_sf"/>
</dbReference>
<dbReference type="NCBIfam" id="TIGR00030">
    <property type="entry name" value="S21p"/>
    <property type="match status" value="1"/>
</dbReference>
<dbReference type="PANTHER" id="PTHR21109">
    <property type="entry name" value="MITOCHONDRIAL 28S RIBOSOMAL PROTEIN S21"/>
    <property type="match status" value="1"/>
</dbReference>
<dbReference type="PANTHER" id="PTHR21109:SF0">
    <property type="entry name" value="SMALL RIBOSOMAL SUBUNIT PROTEIN BS21M"/>
    <property type="match status" value="1"/>
</dbReference>
<dbReference type="Pfam" id="PF01165">
    <property type="entry name" value="Ribosomal_S21"/>
    <property type="match status" value="1"/>
</dbReference>
<dbReference type="PRINTS" id="PR00976">
    <property type="entry name" value="RIBOSOMALS21"/>
</dbReference>
<dbReference type="PROSITE" id="PS01181">
    <property type="entry name" value="RIBOSOMAL_S21"/>
    <property type="match status" value="1"/>
</dbReference>
<keyword id="KW-0903">Direct protein sequencing</keyword>
<keyword id="KW-0687">Ribonucleoprotein</keyword>
<keyword id="KW-0689">Ribosomal protein</keyword>
<evidence type="ECO:0000255" key="1">
    <source>
        <dbReference type="HAMAP-Rule" id="MF_00358"/>
    </source>
</evidence>
<evidence type="ECO:0000256" key="2">
    <source>
        <dbReference type="SAM" id="MobiDB-lite"/>
    </source>
</evidence>
<evidence type="ECO:0000269" key="3">
    <source>
    </source>
</evidence>
<evidence type="ECO:0000303" key="4">
    <source>
    </source>
</evidence>
<evidence type="ECO:0000305" key="5"/>
<organism>
    <name type="scientific">Anabaena variabilis</name>
    <dbReference type="NCBI Taxonomy" id="264691"/>
    <lineage>
        <taxon>Bacteria</taxon>
        <taxon>Bacillati</taxon>
        <taxon>Cyanobacteriota</taxon>
        <taxon>Cyanophyceae</taxon>
        <taxon>Nostocales</taxon>
        <taxon>Nostocaceae</taxon>
        <taxon>Trichormus</taxon>
    </lineage>
</organism>
<name>RS21_ANAVA</name>
<reference key="1">
    <citation type="journal article" date="1994" name="Plant Mol. Biol.">
        <title>A cold-regulated cyanobacterial gene cluster encodes RNA-binding protein and ribosomal protein S21.</title>
        <authorList>
            <person name="Sato N."/>
        </authorList>
    </citation>
    <scope>NUCLEOTIDE SEQUENCE [GENOMIC DNA]</scope>
    <source>
        <strain>M3</strain>
    </source>
</reference>
<reference key="2">
    <citation type="journal article" date="1998" name="Plant Cell Physiol.">
        <title>Ribosomal proteins in the cyanobacterium Anabaena variabilis strain M3: presence of L25 protein.</title>
        <authorList>
            <person name="Sato N."/>
            <person name="Wada A."/>
            <person name="Tanaka A."/>
        </authorList>
    </citation>
    <scope>PROTEIN SEQUENCE OF 2-19</scope>
    <source>
        <strain>M3</strain>
    </source>
</reference>
<proteinExistence type="evidence at protein level"/>
<gene>
    <name evidence="4" type="primary">rpsU</name>
    <name type="synonym">rps21</name>
</gene>
<comment type="similarity">
    <text evidence="5">Belongs to the bacterial ribosomal protein bS21 family.</text>
</comment>